<dbReference type="EMBL" id="CP001016">
    <property type="protein sequence ID" value="ACB96589.1"/>
    <property type="molecule type" value="Genomic_DNA"/>
</dbReference>
<dbReference type="RefSeq" id="WP_012385938.1">
    <property type="nucleotide sequence ID" value="NC_010581.1"/>
</dbReference>
<dbReference type="SMR" id="B2IBG3"/>
<dbReference type="STRING" id="395963.Bind_3027"/>
<dbReference type="KEGG" id="bid:Bind_3027"/>
<dbReference type="eggNOG" id="COG1381">
    <property type="taxonomic scope" value="Bacteria"/>
</dbReference>
<dbReference type="HOGENOM" id="CLU_086029_0_0_5"/>
<dbReference type="OrthoDB" id="9804792at2"/>
<dbReference type="Proteomes" id="UP000001695">
    <property type="component" value="Chromosome"/>
</dbReference>
<dbReference type="GO" id="GO:0043590">
    <property type="term" value="C:bacterial nucleoid"/>
    <property type="evidence" value="ECO:0007669"/>
    <property type="project" value="TreeGrafter"/>
</dbReference>
<dbReference type="GO" id="GO:0006310">
    <property type="term" value="P:DNA recombination"/>
    <property type="evidence" value="ECO:0007669"/>
    <property type="project" value="UniProtKB-UniRule"/>
</dbReference>
<dbReference type="GO" id="GO:0006302">
    <property type="term" value="P:double-strand break repair"/>
    <property type="evidence" value="ECO:0007669"/>
    <property type="project" value="TreeGrafter"/>
</dbReference>
<dbReference type="Gene3D" id="2.40.50.140">
    <property type="entry name" value="Nucleic acid-binding proteins"/>
    <property type="match status" value="1"/>
</dbReference>
<dbReference type="Gene3D" id="1.20.1440.120">
    <property type="entry name" value="Recombination protein O, C-terminal domain"/>
    <property type="match status" value="1"/>
</dbReference>
<dbReference type="HAMAP" id="MF_00201">
    <property type="entry name" value="RecO"/>
    <property type="match status" value="1"/>
</dbReference>
<dbReference type="InterPro" id="IPR037278">
    <property type="entry name" value="ARFGAP/RecO"/>
</dbReference>
<dbReference type="InterPro" id="IPR022572">
    <property type="entry name" value="DNA_rep/recomb_RecO_N"/>
</dbReference>
<dbReference type="InterPro" id="IPR012340">
    <property type="entry name" value="NA-bd_OB-fold"/>
</dbReference>
<dbReference type="InterPro" id="IPR003717">
    <property type="entry name" value="RecO"/>
</dbReference>
<dbReference type="InterPro" id="IPR042242">
    <property type="entry name" value="RecO_C"/>
</dbReference>
<dbReference type="NCBIfam" id="TIGR00613">
    <property type="entry name" value="reco"/>
    <property type="match status" value="1"/>
</dbReference>
<dbReference type="PANTHER" id="PTHR33991">
    <property type="entry name" value="DNA REPAIR PROTEIN RECO"/>
    <property type="match status" value="1"/>
</dbReference>
<dbReference type="PANTHER" id="PTHR33991:SF1">
    <property type="entry name" value="DNA REPAIR PROTEIN RECO"/>
    <property type="match status" value="1"/>
</dbReference>
<dbReference type="Pfam" id="PF02565">
    <property type="entry name" value="RecO_C"/>
    <property type="match status" value="1"/>
</dbReference>
<dbReference type="Pfam" id="PF11967">
    <property type="entry name" value="RecO_N"/>
    <property type="match status" value="1"/>
</dbReference>
<dbReference type="SUPFAM" id="SSF57863">
    <property type="entry name" value="ArfGap/RecO-like zinc finger"/>
    <property type="match status" value="1"/>
</dbReference>
<dbReference type="SUPFAM" id="SSF50249">
    <property type="entry name" value="Nucleic acid-binding proteins"/>
    <property type="match status" value="1"/>
</dbReference>
<reference key="1">
    <citation type="journal article" date="2010" name="J. Bacteriol.">
        <title>Complete genome sequence of Beijerinckia indica subsp. indica.</title>
        <authorList>
            <person name="Tamas I."/>
            <person name="Dedysh S.N."/>
            <person name="Liesack W."/>
            <person name="Stott M.B."/>
            <person name="Alam M."/>
            <person name="Murrell J.C."/>
            <person name="Dunfield P.F."/>
        </authorList>
    </citation>
    <scope>NUCLEOTIDE SEQUENCE [LARGE SCALE GENOMIC DNA]</scope>
    <source>
        <strain>ATCC 9039 / DSM 1715 / NCIMB 8712</strain>
    </source>
</reference>
<proteinExistence type="inferred from homology"/>
<accession>B2IBG3</accession>
<feature type="chain" id="PRO_1000099365" description="DNA repair protein RecO">
    <location>
        <begin position="1"/>
        <end position="250"/>
    </location>
</feature>
<protein>
    <recommendedName>
        <fullName evidence="1">DNA repair protein RecO</fullName>
    </recommendedName>
    <alternativeName>
        <fullName evidence="1">Recombination protein O</fullName>
    </alternativeName>
</protein>
<name>RECO_BEII9</name>
<sequence length="250" mass="27402">MEWHDEGLIIGLRRYGETGAILEVFTPAHGRHFGLVRGGFGRRLRALLQPGNQADFTWRARLDQQLGLLAVEPTKLMTTRLFASGLALQGMNLIAALLRLLPERDPHPELYAVVRVLLEHLDEPAVAPILLARFELAMLTETGFGLDLSACAATGATQELIYVSPKSGRAVSARAGAPYHDKLLGLPPFFLDGSLLKNPTLEEVEAGFALTGHFLMRDLFGPRGQTLPDARHAFLAETAKTYPRVAPQCF</sequence>
<keyword id="KW-0227">DNA damage</keyword>
<keyword id="KW-0233">DNA recombination</keyword>
<keyword id="KW-0234">DNA repair</keyword>
<keyword id="KW-1185">Reference proteome</keyword>
<organism>
    <name type="scientific">Beijerinckia indica subsp. indica (strain ATCC 9039 / DSM 1715 / NCIMB 8712)</name>
    <dbReference type="NCBI Taxonomy" id="395963"/>
    <lineage>
        <taxon>Bacteria</taxon>
        <taxon>Pseudomonadati</taxon>
        <taxon>Pseudomonadota</taxon>
        <taxon>Alphaproteobacteria</taxon>
        <taxon>Hyphomicrobiales</taxon>
        <taxon>Beijerinckiaceae</taxon>
        <taxon>Beijerinckia</taxon>
    </lineage>
</organism>
<comment type="function">
    <text evidence="1">Involved in DNA repair and RecF pathway recombination.</text>
</comment>
<comment type="similarity">
    <text evidence="1">Belongs to the RecO family.</text>
</comment>
<gene>
    <name evidence="1" type="primary">recO</name>
    <name type="ordered locus">Bind_3027</name>
</gene>
<evidence type="ECO:0000255" key="1">
    <source>
        <dbReference type="HAMAP-Rule" id="MF_00201"/>
    </source>
</evidence>